<proteinExistence type="inferred from homology"/>
<gene>
    <name evidence="1" type="primary">rpsE</name>
    <name type="ordered locus">Mpe_A3426</name>
</gene>
<keyword id="KW-1185">Reference proteome</keyword>
<keyword id="KW-0687">Ribonucleoprotein</keyword>
<keyword id="KW-0689">Ribosomal protein</keyword>
<keyword id="KW-0694">RNA-binding</keyword>
<keyword id="KW-0699">rRNA-binding</keyword>
<evidence type="ECO:0000255" key="1">
    <source>
        <dbReference type="HAMAP-Rule" id="MF_01307"/>
    </source>
</evidence>
<evidence type="ECO:0000305" key="2"/>
<accession>A2SLE0</accession>
<organism>
    <name type="scientific">Methylibium petroleiphilum (strain ATCC BAA-1232 / LMG 22953 / PM1)</name>
    <dbReference type="NCBI Taxonomy" id="420662"/>
    <lineage>
        <taxon>Bacteria</taxon>
        <taxon>Pseudomonadati</taxon>
        <taxon>Pseudomonadota</taxon>
        <taxon>Betaproteobacteria</taxon>
        <taxon>Burkholderiales</taxon>
        <taxon>Sphaerotilaceae</taxon>
        <taxon>Methylibium</taxon>
    </lineage>
</organism>
<sequence>MAKFQPRIADDGRDDGLKEKMIQVNRVTKVVKGGRTMSFAALTVVGDGDGRVGMGKGKAKEVPVAVTKAMDAARRDMVKVSLKNGTVHHNVTGEHGAAKVLLAPAAPGTGIIAGGPMRAVFEVMGVTDIVAKSLGSSNPYNMVRATFNALRRSTTPSEVASKRGKSVEEIFN</sequence>
<reference key="1">
    <citation type="journal article" date="2007" name="J. Bacteriol.">
        <title>Whole-genome analysis of the methyl tert-butyl ether-degrading beta-proteobacterium Methylibium petroleiphilum PM1.</title>
        <authorList>
            <person name="Kane S.R."/>
            <person name="Chakicherla A.Y."/>
            <person name="Chain P.S.G."/>
            <person name="Schmidt R."/>
            <person name="Shin M.W."/>
            <person name="Legler T.C."/>
            <person name="Scow K.M."/>
            <person name="Larimer F.W."/>
            <person name="Lucas S.M."/>
            <person name="Richardson P.M."/>
            <person name="Hristova K.R."/>
        </authorList>
    </citation>
    <scope>NUCLEOTIDE SEQUENCE [LARGE SCALE GENOMIC DNA]</scope>
    <source>
        <strain>ATCC BAA-1232 / LMG 22953 / PM1</strain>
    </source>
</reference>
<protein>
    <recommendedName>
        <fullName evidence="1">Small ribosomal subunit protein uS5</fullName>
    </recommendedName>
    <alternativeName>
        <fullName evidence="2">30S ribosomal protein S5</fullName>
    </alternativeName>
</protein>
<feature type="chain" id="PRO_1000086025" description="Small ribosomal subunit protein uS5">
    <location>
        <begin position="1"/>
        <end position="172"/>
    </location>
</feature>
<feature type="domain" description="S5 DRBM" evidence="1">
    <location>
        <begin position="17"/>
        <end position="80"/>
    </location>
</feature>
<name>RS5_METPP</name>
<dbReference type="EMBL" id="CP000555">
    <property type="protein sequence ID" value="ABM96379.1"/>
    <property type="molecule type" value="Genomic_DNA"/>
</dbReference>
<dbReference type="RefSeq" id="WP_011831000.1">
    <property type="nucleotide sequence ID" value="NC_008825.1"/>
</dbReference>
<dbReference type="SMR" id="A2SLE0"/>
<dbReference type="STRING" id="420662.Mpe_A3426"/>
<dbReference type="KEGG" id="mpt:Mpe_A3426"/>
<dbReference type="eggNOG" id="COG0098">
    <property type="taxonomic scope" value="Bacteria"/>
</dbReference>
<dbReference type="HOGENOM" id="CLU_065898_2_2_4"/>
<dbReference type="Proteomes" id="UP000000366">
    <property type="component" value="Chromosome"/>
</dbReference>
<dbReference type="GO" id="GO:0015935">
    <property type="term" value="C:small ribosomal subunit"/>
    <property type="evidence" value="ECO:0007669"/>
    <property type="project" value="InterPro"/>
</dbReference>
<dbReference type="GO" id="GO:0019843">
    <property type="term" value="F:rRNA binding"/>
    <property type="evidence" value="ECO:0007669"/>
    <property type="project" value="UniProtKB-UniRule"/>
</dbReference>
<dbReference type="GO" id="GO:0003735">
    <property type="term" value="F:structural constituent of ribosome"/>
    <property type="evidence" value="ECO:0007669"/>
    <property type="project" value="InterPro"/>
</dbReference>
<dbReference type="GO" id="GO:0006412">
    <property type="term" value="P:translation"/>
    <property type="evidence" value="ECO:0007669"/>
    <property type="project" value="UniProtKB-UniRule"/>
</dbReference>
<dbReference type="FunFam" id="3.30.160.20:FF:000001">
    <property type="entry name" value="30S ribosomal protein S5"/>
    <property type="match status" value="1"/>
</dbReference>
<dbReference type="FunFam" id="3.30.230.10:FF:000002">
    <property type="entry name" value="30S ribosomal protein S5"/>
    <property type="match status" value="1"/>
</dbReference>
<dbReference type="Gene3D" id="3.30.160.20">
    <property type="match status" value="1"/>
</dbReference>
<dbReference type="Gene3D" id="3.30.230.10">
    <property type="match status" value="1"/>
</dbReference>
<dbReference type="HAMAP" id="MF_01307_B">
    <property type="entry name" value="Ribosomal_uS5_B"/>
    <property type="match status" value="1"/>
</dbReference>
<dbReference type="InterPro" id="IPR020568">
    <property type="entry name" value="Ribosomal_Su5_D2-typ_SF"/>
</dbReference>
<dbReference type="InterPro" id="IPR000851">
    <property type="entry name" value="Ribosomal_uS5"/>
</dbReference>
<dbReference type="InterPro" id="IPR005712">
    <property type="entry name" value="Ribosomal_uS5_bac-type"/>
</dbReference>
<dbReference type="InterPro" id="IPR005324">
    <property type="entry name" value="Ribosomal_uS5_C"/>
</dbReference>
<dbReference type="InterPro" id="IPR013810">
    <property type="entry name" value="Ribosomal_uS5_N"/>
</dbReference>
<dbReference type="InterPro" id="IPR018192">
    <property type="entry name" value="Ribosomal_uS5_N_CS"/>
</dbReference>
<dbReference type="InterPro" id="IPR014721">
    <property type="entry name" value="Ribsml_uS5_D2-typ_fold_subgr"/>
</dbReference>
<dbReference type="NCBIfam" id="TIGR01021">
    <property type="entry name" value="rpsE_bact"/>
    <property type="match status" value="1"/>
</dbReference>
<dbReference type="PANTHER" id="PTHR48277">
    <property type="entry name" value="MITOCHONDRIAL RIBOSOMAL PROTEIN S5"/>
    <property type="match status" value="1"/>
</dbReference>
<dbReference type="PANTHER" id="PTHR48277:SF1">
    <property type="entry name" value="MITOCHONDRIAL RIBOSOMAL PROTEIN S5"/>
    <property type="match status" value="1"/>
</dbReference>
<dbReference type="Pfam" id="PF00333">
    <property type="entry name" value="Ribosomal_S5"/>
    <property type="match status" value="1"/>
</dbReference>
<dbReference type="Pfam" id="PF03719">
    <property type="entry name" value="Ribosomal_S5_C"/>
    <property type="match status" value="1"/>
</dbReference>
<dbReference type="SUPFAM" id="SSF54768">
    <property type="entry name" value="dsRNA-binding domain-like"/>
    <property type="match status" value="1"/>
</dbReference>
<dbReference type="SUPFAM" id="SSF54211">
    <property type="entry name" value="Ribosomal protein S5 domain 2-like"/>
    <property type="match status" value="1"/>
</dbReference>
<dbReference type="PROSITE" id="PS00585">
    <property type="entry name" value="RIBOSOMAL_S5"/>
    <property type="match status" value="1"/>
</dbReference>
<dbReference type="PROSITE" id="PS50881">
    <property type="entry name" value="S5_DSRBD"/>
    <property type="match status" value="1"/>
</dbReference>
<comment type="function">
    <text evidence="1">With S4 and S12 plays an important role in translational accuracy.</text>
</comment>
<comment type="function">
    <text evidence="1">Located at the back of the 30S subunit body where it stabilizes the conformation of the head with respect to the body.</text>
</comment>
<comment type="subunit">
    <text evidence="1">Part of the 30S ribosomal subunit. Contacts proteins S4 and S8.</text>
</comment>
<comment type="domain">
    <text>The N-terminal domain interacts with the head of the 30S subunit; the C-terminal domain interacts with the body and contacts protein S4. The interaction surface between S4 and S5 is involved in control of translational fidelity.</text>
</comment>
<comment type="similarity">
    <text evidence="1">Belongs to the universal ribosomal protein uS5 family.</text>
</comment>